<protein>
    <recommendedName>
        <fullName>Stachyose synthase</fullName>
        <ecNumber>2.4.1.67</ecNumber>
    </recommendedName>
    <alternativeName>
        <fullName>Galactinol--raffinose galactosyltransferase</fullName>
    </alternativeName>
</protein>
<name>STSYN_PEA</name>
<dbReference type="EC" id="2.4.1.67"/>
<dbReference type="EMBL" id="AJ311087">
    <property type="protein sequence ID" value="CAC38094.1"/>
    <property type="molecule type" value="mRNA"/>
</dbReference>
<dbReference type="EMBL" id="AJ512932">
    <property type="protein sequence ID" value="CAD55555.1"/>
    <property type="molecule type" value="mRNA"/>
</dbReference>
<dbReference type="SMR" id="Q93XK2"/>
<dbReference type="CAZy" id="GH36">
    <property type="family name" value="Glycoside Hydrolase Family 36"/>
</dbReference>
<dbReference type="BioCyc" id="MetaCyc:MONOMER-12485"/>
<dbReference type="BRENDA" id="2.4.1.67">
    <property type="organism ID" value="4872"/>
</dbReference>
<dbReference type="SABIO-RK" id="Q93XK2"/>
<dbReference type="UniPathway" id="UPA00925">
    <property type="reaction ID" value="UER00892"/>
</dbReference>
<dbReference type="GO" id="GO:0005737">
    <property type="term" value="C:cytoplasm"/>
    <property type="evidence" value="ECO:0000303"/>
    <property type="project" value="UniProtKB"/>
</dbReference>
<dbReference type="GO" id="GO:0047268">
    <property type="term" value="F:galactinol-raffinose galactosyltransferase activity"/>
    <property type="evidence" value="ECO:0000314"/>
    <property type="project" value="UniProtKB"/>
</dbReference>
<dbReference type="GO" id="GO:0009312">
    <property type="term" value="P:oligosaccharide biosynthetic process"/>
    <property type="evidence" value="ECO:0000314"/>
    <property type="project" value="UniProtKB"/>
</dbReference>
<dbReference type="GO" id="GO:0033532">
    <property type="term" value="P:stachyose biosynthetic process"/>
    <property type="evidence" value="ECO:0007669"/>
    <property type="project" value="UniProtKB-UniPathway"/>
</dbReference>
<dbReference type="InterPro" id="IPR017853">
    <property type="entry name" value="Glycoside_hydrolase_SF"/>
</dbReference>
<dbReference type="InterPro" id="IPR008811">
    <property type="entry name" value="Glycosyl_hydrolases_36"/>
</dbReference>
<dbReference type="PANTHER" id="PTHR31268">
    <property type="match status" value="1"/>
</dbReference>
<dbReference type="PANTHER" id="PTHR31268:SF8">
    <property type="entry name" value="GALACTINOL--SUCROSE GALACTOSYLTRANSFERASE 4-RELATED"/>
    <property type="match status" value="1"/>
</dbReference>
<dbReference type="Pfam" id="PF05691">
    <property type="entry name" value="Raffinose_syn"/>
    <property type="match status" value="1"/>
</dbReference>
<dbReference type="SUPFAM" id="SSF51445">
    <property type="entry name" value="(Trans)glycosidases"/>
    <property type="match status" value="2"/>
</dbReference>
<gene>
    <name type="primary">STS1</name>
</gene>
<comment type="function">
    <text evidence="1 3">Catalyzes stachyose synthesis by transfer of a galactosyl moiety from galactinol to raffinose. Also catalyzes verbascose synthesis by galactosyl transfer from galactinol to stachyose or from one stachyose molecule to another. Oligosaccharides of the raffinose family play a protective role in maturation drying of seeds. They may act as cryoprotectants in frost-hardy plants.</text>
</comment>
<comment type="catalytic activity">
    <reaction evidence="1">
        <text>alpha-D-galactosyl-(1-&gt;3)-1D-myo-inositol + raffinose = stachyose + myo-inositol</text>
        <dbReference type="Rhea" id="RHEA:20776"/>
        <dbReference type="ChEBI" id="CHEBI:16634"/>
        <dbReference type="ChEBI" id="CHEBI:17164"/>
        <dbReference type="ChEBI" id="CHEBI:17268"/>
        <dbReference type="ChEBI" id="CHEBI:17505"/>
        <dbReference type="EC" id="2.4.1.67"/>
    </reaction>
</comment>
<comment type="biophysicochemical properties">
    <kinetics>
        <KM evidence="1">13.9 mM for galactinol</KM>
        <KM evidence="1">21.1 mM for raffinose</KM>
        <Vmax evidence="1">1.1 nmol/sec/mg enzyme</Vmax>
        <text evidence="1">Vmax/KM ratio for galactosyl transfer from galactinol to stachyose is 9.5 fold higher compared with galactosyl transfer from one stachyose molecule to another.</text>
    </kinetics>
    <phDependence>
        <text evidence="1">Optimum pH is 7.0.</text>
    </phDependence>
</comment>
<comment type="pathway">
    <text>Glycan metabolism; stachyose biosynthesis; stachyose from raffinose: step 1/1.</text>
</comment>
<comment type="subcellular location">
    <subcellularLocation>
        <location evidence="4">Cytoplasm</location>
    </subcellularLocation>
</comment>
<comment type="polymorphism">
    <text evidence="2">The enzyme from cv. SD1 has very low verbascose synthase activity whereas stachyose synthase activity is normal.</text>
</comment>
<comment type="similarity">
    <text evidence="4">Belongs to the glycosyl hydrolases 36 family.</text>
</comment>
<keyword id="KW-0119">Carbohydrate metabolism</keyword>
<keyword id="KW-0963">Cytoplasm</keyword>
<keyword id="KW-0903">Direct protein sequencing</keyword>
<keyword id="KW-0328">Glycosyltransferase</keyword>
<keyword id="KW-0808">Transferase</keyword>
<organism>
    <name type="scientific">Pisum sativum</name>
    <name type="common">Garden pea</name>
    <name type="synonym">Lathyrus oleraceus</name>
    <dbReference type="NCBI Taxonomy" id="3888"/>
    <lineage>
        <taxon>Eukaryota</taxon>
        <taxon>Viridiplantae</taxon>
        <taxon>Streptophyta</taxon>
        <taxon>Embryophyta</taxon>
        <taxon>Tracheophyta</taxon>
        <taxon>Spermatophyta</taxon>
        <taxon>Magnoliopsida</taxon>
        <taxon>eudicotyledons</taxon>
        <taxon>Gunneridae</taxon>
        <taxon>Pentapetalae</taxon>
        <taxon>rosids</taxon>
        <taxon>fabids</taxon>
        <taxon>Fabales</taxon>
        <taxon>Fabaceae</taxon>
        <taxon>Papilionoideae</taxon>
        <taxon>50 kb inversion clade</taxon>
        <taxon>NPAAA clade</taxon>
        <taxon>Hologalegina</taxon>
        <taxon>IRL clade</taxon>
        <taxon>Fabeae</taxon>
        <taxon>Pisum</taxon>
    </lineage>
</organism>
<feature type="propeptide" id="PRO_0000022432" evidence="1">
    <location>
        <begin position="1"/>
        <end position="11"/>
    </location>
</feature>
<feature type="chain" id="PRO_0000022433" description="Stachyose synthase" evidence="1">
    <location>
        <begin position="12"/>
        <end position="853"/>
    </location>
</feature>
<feature type="sequence conflict" description="In Ref. 2; CAD55555." evidence="4" ref="2">
    <original>I</original>
    <variation>L</variation>
    <location>
        <position position="90"/>
    </location>
</feature>
<feature type="sequence conflict" description="In Ref. 2; CAD55555." evidence="4" ref="2">
    <original>S</original>
    <variation>I</variation>
    <location>
        <position position="197"/>
    </location>
</feature>
<feature type="sequence conflict" description="In Ref. 2; CAD55555." evidence="4" ref="2">
    <original>Y</original>
    <variation>C</variation>
    <location>
        <position position="269"/>
    </location>
</feature>
<feature type="sequence conflict" description="In Ref. 2; CAD55555." evidence="4" ref="2">
    <original>NN</original>
    <variation>KK</variation>
    <location>
        <begin position="317"/>
        <end position="318"/>
    </location>
</feature>
<feature type="sequence conflict" description="In Ref. 2; CAD55555." evidence="4" ref="2">
    <original>G</original>
    <variation>V</variation>
    <location>
        <position position="373"/>
    </location>
</feature>
<feature type="sequence conflict" description="In Ref. 2; CAD55555." evidence="4" ref="2">
    <original>I</original>
    <variation>F</variation>
    <location>
        <position position="425"/>
    </location>
</feature>
<feature type="sequence conflict" description="In Ref. 2; CAD55555." evidence="4" ref="2">
    <original>H</original>
    <variation>Q</variation>
    <location>
        <position position="526"/>
    </location>
</feature>
<feature type="sequence conflict" description="In Ref. 2; CAD55555." evidence="4" ref="2">
    <original>Q</original>
    <variation>K</variation>
    <location>
        <position position="589"/>
    </location>
</feature>
<feature type="sequence conflict" description="In Ref. 2; CAD55555." evidence="4" ref="2">
    <original>V</original>
    <variation>L</variation>
    <location>
        <position position="658"/>
    </location>
</feature>
<feature type="sequence conflict" description="In Ref. 2; CAD55555." evidence="4" ref="2">
    <original>E</original>
    <variation>Q</variation>
    <location>
        <position position="706"/>
    </location>
</feature>
<feature type="sequence conflict" description="In Ref. 2; CAD55555." evidence="4" ref="2">
    <original>L</original>
    <variation>F</variation>
    <location>
        <position position="718"/>
    </location>
</feature>
<feature type="sequence conflict" description="In Ref. 2; CAD55555." evidence="4" ref="2">
    <original>S</original>
    <variation>C</variation>
    <location>
        <position position="735"/>
    </location>
</feature>
<evidence type="ECO:0000269" key="1">
    <source>
    </source>
</evidence>
<evidence type="ECO:0000269" key="2">
    <source ref="2"/>
</evidence>
<evidence type="ECO:0000303" key="3">
    <source>
    </source>
</evidence>
<evidence type="ECO:0000305" key="4"/>
<evidence type="ECO:0000312" key="5">
    <source>
        <dbReference type="EMBL" id="CAC38094.1"/>
    </source>
</evidence>
<evidence type="ECO:0000312" key="6">
    <source>
        <dbReference type="EMBL" id="CAD55555.1"/>
    </source>
</evidence>
<sequence length="853" mass="95890">MAPPLNSTTSNLIKTESIFDLSERKFKVKGFPLFHDVPENVSFRSFSSICKPSESNAPPSLLQKVLAYSHKGGFFGFSHETPSDRLMNSIGSFNGKDFLSIFRFKTWWSTQWIGKSGSDLQMETQWILIEVPETKSYVVIIPIIEKCFRSALFPGFNDHVKIIAESGSTKVKESTFNSIAYVHFSENPYDLMKEAYSAIRVHLNSFRLLEEKTIPNLVDKFGWCTWDAFYLTVNPIGIFHGLDDFSKGGVEPRFVIIDDGWQSISFDGYDPNEDAKNLVLGGEQMSGRLHRFDECYKFRKYESGLLLGPNSPPYDPNNFTDLILKGIEHEKLRKKREEAISSKSSDLAEIESKIKKVVKEIDDLFGGEQFSSGEKSEMKSEYGLKAFTKDLRTKFKGLDDVYVWHALCGAWGGVRPETTHLDTKIVPCKLSPGLDGTMEDLAVVEISKASLGLVHPSQANELYDSMHSYLAESGITGVKVDVIHSLEYVCDEYGGRVDLAKVYYEGLTKSIVKNFNGNGMIASMQHCNDFFFLGTKQISMGRVGDDFWFQDPNGDPMGSFWLQGVHMIHCSYNSLWMGQMIQPDWDMFQSDHVCAKFHAGSRAICGGPIYVSDNVGSHDFDLIKKLVFPDGTIPKCIYFPLPTRDCLFKNPLFDHTTVLKIWNFNKYGGVIGAFNCQGAGWDPIMQKFRGFPECYKPIPGTVHVTEVEWDQKEETSHLGKAEEYVVYLNQAEELSLMTLKSEPIQFTIQPSTFELYSFVPVTKLCGGIKFAPIGLTNMFNSGGTVIDLEYVGNGAKIKVKGGGSFLAYSSESPKKFQLNGCEVDFEWLGDGKLCVNVPWIEEACGVSDMEIFF</sequence>
<accession>Q93XK2</accession>
<accession>Q8H0M9</accession>
<reference evidence="4 5" key="1">
    <citation type="journal article" date="2002" name="J. Biol. Chem.">
        <title>Chain elongation of raffinose in pea seeds. Isolation, characterization, and molecular cloning of a multifunctional enzyme catalyzing the synthesis of stachyose and verbascose.</title>
        <authorList>
            <person name="Peterbauer T."/>
            <person name="Mucha J."/>
            <person name="Mach L."/>
            <person name="Richter A."/>
        </authorList>
    </citation>
    <scope>NUCLEOTIDE SEQUENCE [MRNA]</scope>
    <scope>PROTEIN SEQUENCE OF 12-36</scope>
    <scope>FUNCTION</scope>
    <scope>BIOPHYSICOCHEMICAL PROPERTIES</scope>
    <scope>CATALYTIC ACTIVITY</scope>
    <source>
        <strain evidence="1">cv. Kelvedon Wonder</strain>
        <tissue evidence="5">Seed</tissue>
    </source>
</reference>
<reference evidence="4 6" key="2">
    <citation type="journal article" date="2003" name="Plant Cell Environ.">
        <title>Enzymatic control of the accumulation of verbascose in pea seeds.</title>
        <authorList>
            <person name="Peterbauer T."/>
            <person name="Karner U."/>
            <person name="Mucha J."/>
            <person name="Mach L."/>
            <person name="Jones D.A."/>
            <person name="Hedley C.L."/>
            <person name="Richter A."/>
        </authorList>
    </citation>
    <scope>NUCLEOTIDE SEQUENCE [MRNA]</scope>
    <source>
        <strain evidence="2">cv. SD1</strain>
        <tissue evidence="6">Seed</tissue>
    </source>
</reference>
<proteinExistence type="evidence at protein level"/>